<feature type="chain" id="PRO_1000002819" description="Crossover junction endodeoxyribonuclease RuvC">
    <location>
        <begin position="1"/>
        <end position="157"/>
    </location>
</feature>
<feature type="active site" evidence="1">
    <location>
        <position position="7"/>
    </location>
</feature>
<feature type="active site" evidence="1">
    <location>
        <position position="67"/>
    </location>
</feature>
<feature type="active site" evidence="1">
    <location>
        <position position="140"/>
    </location>
</feature>
<feature type="binding site" evidence="1">
    <location>
        <position position="7"/>
    </location>
    <ligand>
        <name>Mg(2+)</name>
        <dbReference type="ChEBI" id="CHEBI:18420"/>
        <label>1</label>
    </ligand>
</feature>
<feature type="binding site" evidence="1">
    <location>
        <position position="67"/>
    </location>
    <ligand>
        <name>Mg(2+)</name>
        <dbReference type="ChEBI" id="CHEBI:18420"/>
        <label>2</label>
    </ligand>
</feature>
<feature type="binding site" evidence="1">
    <location>
        <position position="140"/>
    </location>
    <ligand>
        <name>Mg(2+)</name>
        <dbReference type="ChEBI" id="CHEBI:18420"/>
        <label>1</label>
    </ligand>
</feature>
<gene>
    <name evidence="1" type="primary">ruvC</name>
    <name type="ordered locus">A1I_01390</name>
</gene>
<dbReference type="EC" id="3.1.21.10" evidence="1"/>
<dbReference type="EMBL" id="CP000849">
    <property type="protein sequence ID" value="ABV78670.1"/>
    <property type="molecule type" value="Genomic_DNA"/>
</dbReference>
<dbReference type="RefSeq" id="WP_012151610.1">
    <property type="nucleotide sequence ID" value="NC_009883.1"/>
</dbReference>
<dbReference type="SMR" id="A8GUZ9"/>
<dbReference type="KEGG" id="rbo:A1I_01390"/>
<dbReference type="HOGENOM" id="CLU_091257_1_0_5"/>
<dbReference type="GO" id="GO:0005737">
    <property type="term" value="C:cytoplasm"/>
    <property type="evidence" value="ECO:0007669"/>
    <property type="project" value="UniProtKB-SubCell"/>
</dbReference>
<dbReference type="GO" id="GO:0048476">
    <property type="term" value="C:Holliday junction resolvase complex"/>
    <property type="evidence" value="ECO:0007669"/>
    <property type="project" value="UniProtKB-UniRule"/>
</dbReference>
<dbReference type="GO" id="GO:0008821">
    <property type="term" value="F:crossover junction DNA endonuclease activity"/>
    <property type="evidence" value="ECO:0007669"/>
    <property type="project" value="UniProtKB-UniRule"/>
</dbReference>
<dbReference type="GO" id="GO:0003677">
    <property type="term" value="F:DNA binding"/>
    <property type="evidence" value="ECO:0007669"/>
    <property type="project" value="UniProtKB-KW"/>
</dbReference>
<dbReference type="GO" id="GO:0000287">
    <property type="term" value="F:magnesium ion binding"/>
    <property type="evidence" value="ECO:0007669"/>
    <property type="project" value="UniProtKB-UniRule"/>
</dbReference>
<dbReference type="GO" id="GO:0006310">
    <property type="term" value="P:DNA recombination"/>
    <property type="evidence" value="ECO:0007669"/>
    <property type="project" value="UniProtKB-UniRule"/>
</dbReference>
<dbReference type="GO" id="GO:0006281">
    <property type="term" value="P:DNA repair"/>
    <property type="evidence" value="ECO:0007669"/>
    <property type="project" value="UniProtKB-UniRule"/>
</dbReference>
<dbReference type="CDD" id="cd16962">
    <property type="entry name" value="RuvC"/>
    <property type="match status" value="1"/>
</dbReference>
<dbReference type="FunFam" id="3.30.420.10:FF:000002">
    <property type="entry name" value="Crossover junction endodeoxyribonuclease RuvC"/>
    <property type="match status" value="1"/>
</dbReference>
<dbReference type="Gene3D" id="3.30.420.10">
    <property type="entry name" value="Ribonuclease H-like superfamily/Ribonuclease H"/>
    <property type="match status" value="1"/>
</dbReference>
<dbReference type="HAMAP" id="MF_00034">
    <property type="entry name" value="RuvC"/>
    <property type="match status" value="1"/>
</dbReference>
<dbReference type="InterPro" id="IPR012337">
    <property type="entry name" value="RNaseH-like_sf"/>
</dbReference>
<dbReference type="InterPro" id="IPR036397">
    <property type="entry name" value="RNaseH_sf"/>
</dbReference>
<dbReference type="InterPro" id="IPR020563">
    <property type="entry name" value="X-over_junc_endoDNase_Mg_BS"/>
</dbReference>
<dbReference type="InterPro" id="IPR002176">
    <property type="entry name" value="X-over_junc_endoDNase_RuvC"/>
</dbReference>
<dbReference type="NCBIfam" id="TIGR00228">
    <property type="entry name" value="ruvC"/>
    <property type="match status" value="1"/>
</dbReference>
<dbReference type="PANTHER" id="PTHR30194">
    <property type="entry name" value="CROSSOVER JUNCTION ENDODEOXYRIBONUCLEASE RUVC"/>
    <property type="match status" value="1"/>
</dbReference>
<dbReference type="PANTHER" id="PTHR30194:SF3">
    <property type="entry name" value="CROSSOVER JUNCTION ENDODEOXYRIBONUCLEASE RUVC"/>
    <property type="match status" value="1"/>
</dbReference>
<dbReference type="Pfam" id="PF02075">
    <property type="entry name" value="RuvC"/>
    <property type="match status" value="1"/>
</dbReference>
<dbReference type="PRINTS" id="PR00696">
    <property type="entry name" value="RSOLVASERUVC"/>
</dbReference>
<dbReference type="SUPFAM" id="SSF53098">
    <property type="entry name" value="Ribonuclease H-like"/>
    <property type="match status" value="1"/>
</dbReference>
<dbReference type="PROSITE" id="PS01321">
    <property type="entry name" value="RUVC"/>
    <property type="match status" value="1"/>
</dbReference>
<organism>
    <name type="scientific">Rickettsia bellii (strain OSU 85-389)</name>
    <dbReference type="NCBI Taxonomy" id="391896"/>
    <lineage>
        <taxon>Bacteria</taxon>
        <taxon>Pseudomonadati</taxon>
        <taxon>Pseudomonadota</taxon>
        <taxon>Alphaproteobacteria</taxon>
        <taxon>Rickettsiales</taxon>
        <taxon>Rickettsiaceae</taxon>
        <taxon>Rickettsieae</taxon>
        <taxon>Rickettsia</taxon>
        <taxon>belli group</taxon>
    </lineage>
</organism>
<protein>
    <recommendedName>
        <fullName evidence="1">Crossover junction endodeoxyribonuclease RuvC</fullName>
        <ecNumber evidence="1">3.1.21.10</ecNumber>
    </recommendedName>
    <alternativeName>
        <fullName evidence="1">Holliday junction nuclease RuvC</fullName>
    </alternativeName>
    <alternativeName>
        <fullName evidence="1">Holliday junction resolvase RuvC</fullName>
    </alternativeName>
</protein>
<keyword id="KW-0963">Cytoplasm</keyword>
<keyword id="KW-0227">DNA damage</keyword>
<keyword id="KW-0233">DNA recombination</keyword>
<keyword id="KW-0234">DNA repair</keyword>
<keyword id="KW-0238">DNA-binding</keyword>
<keyword id="KW-0255">Endonuclease</keyword>
<keyword id="KW-0378">Hydrolase</keyword>
<keyword id="KW-0460">Magnesium</keyword>
<keyword id="KW-0479">Metal-binding</keyword>
<keyword id="KW-0540">Nuclease</keyword>
<comment type="function">
    <text evidence="1">The RuvA-RuvB-RuvC complex processes Holliday junction (HJ) DNA during genetic recombination and DNA repair. Endonuclease that resolves HJ intermediates. Cleaves cruciform DNA by making single-stranded nicks across the HJ at symmetrical positions within the homologous arms, yielding a 5'-phosphate and a 3'-hydroxyl group; requires a central core of homology in the junction. The consensus cleavage sequence is 5'-(A/T)TT(C/G)-3'. Cleavage occurs on the 3'-side of the TT dinucleotide at the point of strand exchange. HJ branch migration catalyzed by RuvA-RuvB allows RuvC to scan DNA until it finds its consensus sequence, where it cleaves and resolves the cruciform DNA.</text>
</comment>
<comment type="catalytic activity">
    <reaction evidence="1">
        <text>Endonucleolytic cleavage at a junction such as a reciprocal single-stranded crossover between two homologous DNA duplexes (Holliday junction).</text>
        <dbReference type="EC" id="3.1.21.10"/>
    </reaction>
</comment>
<comment type="cofactor">
    <cofactor evidence="1">
        <name>Mg(2+)</name>
        <dbReference type="ChEBI" id="CHEBI:18420"/>
    </cofactor>
    <text evidence="1">Binds 2 Mg(2+) ion per subunit.</text>
</comment>
<comment type="subunit">
    <text evidence="1">Homodimer which binds Holliday junction (HJ) DNA. The HJ becomes 2-fold symmetrical on binding to RuvC with unstacked arms; it has a different conformation from HJ DNA in complex with RuvA. In the full resolvosome a probable DNA-RuvA(4)-RuvB(12)-RuvC(2) complex forms which resolves the HJ.</text>
</comment>
<comment type="subcellular location">
    <subcellularLocation>
        <location evidence="1">Cytoplasm</location>
    </subcellularLocation>
</comment>
<comment type="similarity">
    <text evidence="1">Belongs to the RuvC family.</text>
</comment>
<reference key="1">
    <citation type="submission" date="2007-09" db="EMBL/GenBank/DDBJ databases">
        <title>Complete genome sequencing of Rickettsia bellii.</title>
        <authorList>
            <person name="Madan A."/>
            <person name="Lee H."/>
            <person name="Madan A."/>
            <person name="Yoon J.-G."/>
            <person name="Ryu G.-Y."/>
            <person name="Dasch G."/>
            <person name="Ereemeva M."/>
        </authorList>
    </citation>
    <scope>NUCLEOTIDE SEQUENCE [LARGE SCALE GENOMIC DNA]</scope>
    <source>
        <strain>OSU 85-389</strain>
    </source>
</reference>
<name>RUVC_RICB8</name>
<proteinExistence type="inferred from homology"/>
<evidence type="ECO:0000255" key="1">
    <source>
        <dbReference type="HAMAP-Rule" id="MF_00034"/>
    </source>
</evidence>
<sequence>MIVLGIDPALGSLGWAVVAKESAKLKYLASGVIKTSSKDEIHHRLSYINSILEKVILEYKPNMATIEETFVNTNSVTSLKLGYARGAIMSLIGRYDLDMREFKPNTIKKTVTGYGHAEKDQILHMIKLLLPGTAAITNSDEADAVAIAYTCLVTKNY</sequence>
<accession>A8GUZ9</accession>